<comment type="function">
    <text evidence="1">One of several proteins that assist in the late maturation steps of the functional core of the 30S ribosomal subunit. Associates with free 30S ribosomal subunits (but not with 30S subunits that are part of 70S ribosomes or polysomes). Required for efficient processing of 16S rRNA. May interact with the 5'-terminal helix region of 16S rRNA.</text>
</comment>
<comment type="subunit">
    <text evidence="1">Monomer. Binds 30S ribosomal subunits, but not 50S ribosomal subunits or 70S ribosomes.</text>
</comment>
<comment type="subcellular location">
    <subcellularLocation>
        <location evidence="1">Cytoplasm</location>
    </subcellularLocation>
</comment>
<comment type="similarity">
    <text evidence="1">Belongs to the RbfA family.</text>
</comment>
<evidence type="ECO:0000255" key="1">
    <source>
        <dbReference type="HAMAP-Rule" id="MF_00003"/>
    </source>
</evidence>
<keyword id="KW-0963">Cytoplasm</keyword>
<keyword id="KW-0690">Ribosome biogenesis</keyword>
<feature type="chain" id="PRO_1000088915" description="Ribosome-binding factor A">
    <location>
        <begin position="1"/>
        <end position="122"/>
    </location>
</feature>
<dbReference type="EMBL" id="CP001108">
    <property type="protein sequence ID" value="ACF45425.1"/>
    <property type="molecule type" value="Genomic_DNA"/>
</dbReference>
<dbReference type="RefSeq" id="WP_012504962.1">
    <property type="nucleotide sequence ID" value="NC_011059.1"/>
</dbReference>
<dbReference type="SMR" id="B4S4S7"/>
<dbReference type="STRING" id="290512.Paes_0368"/>
<dbReference type="KEGG" id="paa:Paes_0368"/>
<dbReference type="eggNOG" id="COG0858">
    <property type="taxonomic scope" value="Bacteria"/>
</dbReference>
<dbReference type="HOGENOM" id="CLU_089475_4_0_10"/>
<dbReference type="Proteomes" id="UP000002725">
    <property type="component" value="Chromosome"/>
</dbReference>
<dbReference type="GO" id="GO:0005829">
    <property type="term" value="C:cytosol"/>
    <property type="evidence" value="ECO:0007669"/>
    <property type="project" value="TreeGrafter"/>
</dbReference>
<dbReference type="GO" id="GO:0043024">
    <property type="term" value="F:ribosomal small subunit binding"/>
    <property type="evidence" value="ECO:0007669"/>
    <property type="project" value="TreeGrafter"/>
</dbReference>
<dbReference type="GO" id="GO:0030490">
    <property type="term" value="P:maturation of SSU-rRNA"/>
    <property type="evidence" value="ECO:0007669"/>
    <property type="project" value="UniProtKB-UniRule"/>
</dbReference>
<dbReference type="Gene3D" id="3.30.300.20">
    <property type="match status" value="1"/>
</dbReference>
<dbReference type="HAMAP" id="MF_00003">
    <property type="entry name" value="RbfA"/>
    <property type="match status" value="1"/>
</dbReference>
<dbReference type="InterPro" id="IPR015946">
    <property type="entry name" value="KH_dom-like_a/b"/>
</dbReference>
<dbReference type="InterPro" id="IPR000238">
    <property type="entry name" value="RbfA"/>
</dbReference>
<dbReference type="InterPro" id="IPR023799">
    <property type="entry name" value="RbfA_dom_sf"/>
</dbReference>
<dbReference type="NCBIfam" id="TIGR00082">
    <property type="entry name" value="rbfA"/>
    <property type="match status" value="1"/>
</dbReference>
<dbReference type="PANTHER" id="PTHR33515">
    <property type="entry name" value="RIBOSOME-BINDING FACTOR A, CHLOROPLASTIC-RELATED"/>
    <property type="match status" value="1"/>
</dbReference>
<dbReference type="PANTHER" id="PTHR33515:SF1">
    <property type="entry name" value="RIBOSOME-BINDING FACTOR A, CHLOROPLASTIC-RELATED"/>
    <property type="match status" value="1"/>
</dbReference>
<dbReference type="Pfam" id="PF02033">
    <property type="entry name" value="RBFA"/>
    <property type="match status" value="1"/>
</dbReference>
<dbReference type="SUPFAM" id="SSF89919">
    <property type="entry name" value="Ribosome-binding factor A, RbfA"/>
    <property type="match status" value="1"/>
</dbReference>
<reference key="1">
    <citation type="submission" date="2008-06" db="EMBL/GenBank/DDBJ databases">
        <title>Complete sequence of chromosome of Prosthecochloris aestuarii DSM 271.</title>
        <authorList>
            <consortium name="US DOE Joint Genome Institute"/>
            <person name="Lucas S."/>
            <person name="Copeland A."/>
            <person name="Lapidus A."/>
            <person name="Glavina del Rio T."/>
            <person name="Dalin E."/>
            <person name="Tice H."/>
            <person name="Bruce D."/>
            <person name="Goodwin L."/>
            <person name="Pitluck S."/>
            <person name="Schmutz J."/>
            <person name="Larimer F."/>
            <person name="Land M."/>
            <person name="Hauser L."/>
            <person name="Kyrpides N."/>
            <person name="Anderson I."/>
            <person name="Liu Z."/>
            <person name="Li T."/>
            <person name="Zhao F."/>
            <person name="Overmann J."/>
            <person name="Bryant D.A."/>
            <person name="Richardson P."/>
        </authorList>
    </citation>
    <scope>NUCLEOTIDE SEQUENCE [LARGE SCALE GENOMIC DNA]</scope>
    <source>
        <strain>DSM 271 / SK 413</strain>
    </source>
</reference>
<proteinExistence type="inferred from homology"/>
<organism>
    <name type="scientific">Prosthecochloris aestuarii (strain DSM 271 / SK 413)</name>
    <dbReference type="NCBI Taxonomy" id="290512"/>
    <lineage>
        <taxon>Bacteria</taxon>
        <taxon>Pseudomonadati</taxon>
        <taxon>Chlorobiota</taxon>
        <taxon>Chlorobiia</taxon>
        <taxon>Chlorobiales</taxon>
        <taxon>Chlorobiaceae</taxon>
        <taxon>Prosthecochloris</taxon>
    </lineage>
</organism>
<sequence>MSIRTGKVSSLLQKELSSIFEKELPRSGPLLTIVEVKVTADLGIARVYVSLIGSEKERGLLMEHLQNETKYIRKLLSSRIRHQFRRIPELEFYEDEQYDKARRIEELLKEALNRPGEEQTES</sequence>
<protein>
    <recommendedName>
        <fullName evidence="1">Ribosome-binding factor A</fullName>
    </recommendedName>
</protein>
<accession>B4S4S7</accession>
<gene>
    <name evidence="1" type="primary">rbfA</name>
    <name type="ordered locus">Paes_0368</name>
</gene>
<name>RBFA_PROA2</name>